<gene>
    <name evidence="1" type="primary">MDM12</name>
    <name type="ORF">UMAG_01549</name>
</gene>
<feature type="chain" id="PRO_0000384316" description="Mitochondrial distribution and morphology protein 12">
    <location>
        <begin position="1"/>
        <end position="461"/>
    </location>
</feature>
<feature type="domain" description="SMP-LTD" evidence="1">
    <location>
        <begin position="1"/>
        <end position="454"/>
    </location>
</feature>
<feature type="region of interest" description="Disordered" evidence="2">
    <location>
        <begin position="75"/>
        <end position="104"/>
    </location>
</feature>
<feature type="region of interest" description="Disordered" evidence="2">
    <location>
        <begin position="226"/>
        <end position="301"/>
    </location>
</feature>
<feature type="compositionally biased region" description="Polar residues" evidence="2">
    <location>
        <begin position="80"/>
        <end position="97"/>
    </location>
</feature>
<feature type="compositionally biased region" description="Polar residues" evidence="2">
    <location>
        <begin position="272"/>
        <end position="288"/>
    </location>
</feature>
<accession>Q4PEB4</accession>
<accession>A0A0D1E2J7</accession>
<sequence length="461" mass="49347">MSLDLDWNLLDDQLSDRFLETINRALEASASKRPSFIGDIQFEKLDFGSDSPDVAIRSITDIWPDFVSIDEPPLRRRGARQTTPASNATTLVESPTDSFGVHHGGVGEIPLRTYTQFDDAAPPNRIHGPPSVVSASVAGSGPMTPAAAAGVANVFSQQWSTALASRGIRAAGMGSATSLPQTQVTSPVDSVPPSPGYFQHWQQHQQLATTGFVPYSVINSRQTSLDASSLRGGGSGPQSSVSQIGVKRDSNSLHPPLGGTYANGLGPRASMRATSAPSFRSISGQNSPGEEREAVASPSSASQLPSLQMRLSLVWPTTTFRLTITTSLLINYPSAAFMSLPLTLSVTGFMMRCGVIVALEGEHQRAHVCLVQEQDDERDPAFVSAGQAAAGSEKKLNSAGINILPQLTFESEVGQHEKHVLKNVGKVEKFIAEVIRKGLEDELVYPNYYTIDLPASKRHSL</sequence>
<protein>
    <recommendedName>
        <fullName evidence="1">Mitochondrial distribution and morphology protein 12</fullName>
    </recommendedName>
    <alternativeName>
        <fullName evidence="1">Mitochondrial inheritance component MDM12</fullName>
    </alternativeName>
</protein>
<evidence type="ECO:0000255" key="1">
    <source>
        <dbReference type="HAMAP-Rule" id="MF_03104"/>
    </source>
</evidence>
<evidence type="ECO:0000256" key="2">
    <source>
        <dbReference type="SAM" id="MobiDB-lite"/>
    </source>
</evidence>
<organism>
    <name type="scientific">Mycosarcoma maydis</name>
    <name type="common">Corn smut fungus</name>
    <name type="synonym">Ustilago maydis</name>
    <dbReference type="NCBI Taxonomy" id="5270"/>
    <lineage>
        <taxon>Eukaryota</taxon>
        <taxon>Fungi</taxon>
        <taxon>Dikarya</taxon>
        <taxon>Basidiomycota</taxon>
        <taxon>Ustilaginomycotina</taxon>
        <taxon>Ustilaginomycetes</taxon>
        <taxon>Ustilaginales</taxon>
        <taxon>Ustilaginaceae</taxon>
        <taxon>Mycosarcoma</taxon>
    </lineage>
</organism>
<dbReference type="EMBL" id="CM003142">
    <property type="protein sequence ID" value="KIS70379.1"/>
    <property type="molecule type" value="Genomic_DNA"/>
</dbReference>
<dbReference type="RefSeq" id="XP_011387575.1">
    <property type="nucleotide sequence ID" value="XM_011389273.1"/>
</dbReference>
<dbReference type="STRING" id="237631.Q4PEB4"/>
<dbReference type="EnsemblFungi" id="KIS70379">
    <property type="protein sequence ID" value="KIS70379"/>
    <property type="gene ID" value="UMAG_01549"/>
</dbReference>
<dbReference type="GeneID" id="23562522"/>
<dbReference type="KEGG" id="uma:UMAG_01549"/>
<dbReference type="VEuPathDB" id="FungiDB:UMAG_01549"/>
<dbReference type="eggNOG" id="ENOG502S1MJ">
    <property type="taxonomic scope" value="Eukaryota"/>
</dbReference>
<dbReference type="HOGENOM" id="CLU_026794_1_0_1"/>
<dbReference type="InParanoid" id="Q4PEB4"/>
<dbReference type="OMA" id="ITDIWPD"/>
<dbReference type="OrthoDB" id="3356905at2759"/>
<dbReference type="Proteomes" id="UP000000561">
    <property type="component" value="Chromosome 3"/>
</dbReference>
<dbReference type="GO" id="GO:0005789">
    <property type="term" value="C:endoplasmic reticulum membrane"/>
    <property type="evidence" value="ECO:0007669"/>
    <property type="project" value="UniProtKB-SubCell"/>
</dbReference>
<dbReference type="GO" id="GO:0032865">
    <property type="term" value="C:ERMES complex"/>
    <property type="evidence" value="ECO:0000318"/>
    <property type="project" value="GO_Central"/>
</dbReference>
<dbReference type="GO" id="GO:0008289">
    <property type="term" value="F:lipid binding"/>
    <property type="evidence" value="ECO:0007669"/>
    <property type="project" value="UniProtKB-KW"/>
</dbReference>
<dbReference type="GO" id="GO:0000002">
    <property type="term" value="P:mitochondrial genome maintenance"/>
    <property type="evidence" value="ECO:0007669"/>
    <property type="project" value="UniProtKB-UniRule"/>
</dbReference>
<dbReference type="GO" id="GO:1990456">
    <property type="term" value="P:mitochondrion-endoplasmic reticulum membrane tethering"/>
    <property type="evidence" value="ECO:0000318"/>
    <property type="project" value="GO_Central"/>
</dbReference>
<dbReference type="GO" id="GO:0015914">
    <property type="term" value="P:phospholipid transport"/>
    <property type="evidence" value="ECO:0000318"/>
    <property type="project" value="GO_Central"/>
</dbReference>
<dbReference type="GO" id="GO:0045040">
    <property type="term" value="P:protein insertion into mitochondrial outer membrane"/>
    <property type="evidence" value="ECO:0007669"/>
    <property type="project" value="UniProtKB-UniRule"/>
</dbReference>
<dbReference type="CDD" id="cd21672">
    <property type="entry name" value="SMP_Mdm12"/>
    <property type="match status" value="1"/>
</dbReference>
<dbReference type="HAMAP" id="MF_03104">
    <property type="entry name" value="Mdm12"/>
    <property type="match status" value="1"/>
</dbReference>
<dbReference type="InterPro" id="IPR027532">
    <property type="entry name" value="Mdm12"/>
</dbReference>
<dbReference type="InterPro" id="IPR019411">
    <property type="entry name" value="MMM1_dom"/>
</dbReference>
<dbReference type="InterPro" id="IPR031468">
    <property type="entry name" value="SMP_LBD"/>
</dbReference>
<dbReference type="PANTHER" id="PTHR28204">
    <property type="entry name" value="MITOCHONDRIAL DISTRIBUTION AND MORPHOLOGY PROTEIN 12"/>
    <property type="match status" value="1"/>
</dbReference>
<dbReference type="PANTHER" id="PTHR28204:SF1">
    <property type="entry name" value="MITOCHONDRIAL DISTRIBUTION AND MORPHOLOGY PROTEIN 12"/>
    <property type="match status" value="1"/>
</dbReference>
<dbReference type="Pfam" id="PF10296">
    <property type="entry name" value="MMM1"/>
    <property type="match status" value="1"/>
</dbReference>
<dbReference type="PROSITE" id="PS51847">
    <property type="entry name" value="SMP"/>
    <property type="match status" value="1"/>
</dbReference>
<proteinExistence type="inferred from homology"/>
<comment type="function">
    <text evidence="1">Component of the ERMES/MDM complex, which serves as a molecular tether to connect the endoplasmic reticulum (ER) and mitochondria. Components of this complex are involved in the control of mitochondrial shape and protein biogenesis, and function in nonvesicular lipid trafficking between the ER and mitochondria. MDM12 is required for the interaction of the ER-resident membrane protein MMM1 and the outer mitochondrial membrane-resident beta-barrel protein MDM10. The MDM12-MMM1 subcomplex functions in the major beta-barrel assembly pathway that is responsible for biogenesis of all mitochondrial outer membrane beta-barrel proteins, and acts in a late step after the SAM complex. The MDM10-MDM12-MMM1 subcomplex further acts in the TOM40-specific pathway after the action of the MDM12-MMM1 complex. Essential for establishing and maintaining the structure of mitochondria and maintenance of mtDNA nucleoids.</text>
</comment>
<comment type="subunit">
    <text evidence="1">Component of the ER-mitochondria encounter structure (ERMES) or MDM complex, composed of MMM1, MDM10, MDM12 and MDM34. A MMM1 homodimer associates with one molecule of MDM12 on each side in a pairwise head-to-tail manner, and the SMP-LTD domains of MMM1 and MDM12 generate a continuous hydrophobic tunnel for phospholipid trafficking.</text>
</comment>
<comment type="subcellular location">
    <subcellularLocation>
        <location evidence="1">Mitochondrion outer membrane</location>
        <topology evidence="1">Peripheral membrane protein</topology>
        <orientation evidence="1">Cytoplasmic side</orientation>
    </subcellularLocation>
    <subcellularLocation>
        <location evidence="1">Endoplasmic reticulum membrane</location>
        <topology evidence="1">Peripheral membrane protein</topology>
        <orientation evidence="1">Cytoplasmic side</orientation>
    </subcellularLocation>
    <text evidence="1">The ERMES/MDM complex localizes to a few discrete foci (around 10 per single cell), that represent mitochondria-endoplasmic reticulum junctions. These foci are often found next to mtDNA nucleoids.</text>
</comment>
<comment type="domain">
    <text evidence="1">The SMP-LTD domain is a barrel-like domain that can bind various types of glycerophospholipids in its interior and mediate their transfer between two adjacent bilayers.</text>
</comment>
<comment type="similarity">
    <text evidence="1">Belongs to the MDM12 family.</text>
</comment>
<reference key="1">
    <citation type="journal article" date="2006" name="Nature">
        <title>Insights from the genome of the biotrophic fungal plant pathogen Ustilago maydis.</title>
        <authorList>
            <person name="Kaemper J."/>
            <person name="Kahmann R."/>
            <person name="Boelker M."/>
            <person name="Ma L.-J."/>
            <person name="Brefort T."/>
            <person name="Saville B.J."/>
            <person name="Banuett F."/>
            <person name="Kronstad J.W."/>
            <person name="Gold S.E."/>
            <person name="Mueller O."/>
            <person name="Perlin M.H."/>
            <person name="Woesten H.A.B."/>
            <person name="de Vries R."/>
            <person name="Ruiz-Herrera J."/>
            <person name="Reynaga-Pena C.G."/>
            <person name="Snetselaar K."/>
            <person name="McCann M."/>
            <person name="Perez-Martin J."/>
            <person name="Feldbruegge M."/>
            <person name="Basse C.W."/>
            <person name="Steinberg G."/>
            <person name="Ibeas J.I."/>
            <person name="Holloman W."/>
            <person name="Guzman P."/>
            <person name="Farman M.L."/>
            <person name="Stajich J.E."/>
            <person name="Sentandreu R."/>
            <person name="Gonzalez-Prieto J.M."/>
            <person name="Kennell J.C."/>
            <person name="Molina L."/>
            <person name="Schirawski J."/>
            <person name="Mendoza-Mendoza A."/>
            <person name="Greilinger D."/>
            <person name="Muench K."/>
            <person name="Roessel N."/>
            <person name="Scherer M."/>
            <person name="Vranes M."/>
            <person name="Ladendorf O."/>
            <person name="Vincon V."/>
            <person name="Fuchs U."/>
            <person name="Sandrock B."/>
            <person name="Meng S."/>
            <person name="Ho E.C.H."/>
            <person name="Cahill M.J."/>
            <person name="Boyce K.J."/>
            <person name="Klose J."/>
            <person name="Klosterman S.J."/>
            <person name="Deelstra H.J."/>
            <person name="Ortiz-Castellanos L."/>
            <person name="Li W."/>
            <person name="Sanchez-Alonso P."/>
            <person name="Schreier P.H."/>
            <person name="Haeuser-Hahn I."/>
            <person name="Vaupel M."/>
            <person name="Koopmann E."/>
            <person name="Friedrich G."/>
            <person name="Voss H."/>
            <person name="Schlueter T."/>
            <person name="Margolis J."/>
            <person name="Platt D."/>
            <person name="Swimmer C."/>
            <person name="Gnirke A."/>
            <person name="Chen F."/>
            <person name="Vysotskaia V."/>
            <person name="Mannhaupt G."/>
            <person name="Gueldener U."/>
            <person name="Muensterkoetter M."/>
            <person name="Haase D."/>
            <person name="Oesterheld M."/>
            <person name="Mewes H.-W."/>
            <person name="Mauceli E.W."/>
            <person name="DeCaprio D."/>
            <person name="Wade C.M."/>
            <person name="Butler J."/>
            <person name="Young S.K."/>
            <person name="Jaffe D.B."/>
            <person name="Calvo S.E."/>
            <person name="Nusbaum C."/>
            <person name="Galagan J.E."/>
            <person name="Birren B.W."/>
        </authorList>
    </citation>
    <scope>NUCLEOTIDE SEQUENCE [LARGE SCALE GENOMIC DNA]</scope>
    <source>
        <strain>DSM 14603 / FGSC 9021 / UM521</strain>
    </source>
</reference>
<reference key="2">
    <citation type="submission" date="2014-09" db="EMBL/GenBank/DDBJ databases">
        <authorList>
            <person name="Gueldener U."/>
            <person name="Muensterkoetter M."/>
            <person name="Walter M.C."/>
            <person name="Mannhaupt G."/>
            <person name="Kahmann R."/>
        </authorList>
    </citation>
    <scope>GENOME REANNOTATION</scope>
    <source>
        <strain>DSM 14603 / FGSC 9021 / UM521</strain>
    </source>
</reference>
<keyword id="KW-0256">Endoplasmic reticulum</keyword>
<keyword id="KW-0445">Lipid transport</keyword>
<keyword id="KW-0446">Lipid-binding</keyword>
<keyword id="KW-0472">Membrane</keyword>
<keyword id="KW-0496">Mitochondrion</keyword>
<keyword id="KW-1000">Mitochondrion outer membrane</keyword>
<keyword id="KW-1185">Reference proteome</keyword>
<keyword id="KW-0813">Transport</keyword>
<name>MDM12_MYCMD</name>